<gene>
    <name type="primary">DLEC1</name>
</gene>
<reference key="1">
    <citation type="journal article" date="1985" name="EMBO J.">
        <title>Characterization of two Phaseolus vulgaris phytohemagglutinin genes closely linked on the chromosome.</title>
        <authorList>
            <person name="Hoffman L.M."/>
            <person name="Donaldson D.D."/>
        </authorList>
    </citation>
    <scope>NUCLEOTIDE SEQUENCE [GENOMIC DNA]</scope>
</reference>
<reference key="2">
    <citation type="journal article" date="1986" name="Plant Physiol.">
        <title>The high mannose oligosaccharide of phytohemagglutinin is attached to asparagine 12 and the modified oligosaccharide to asparagine 60.</title>
        <authorList>
            <person name="Strum A."/>
            <person name="Chrispeels M.J."/>
        </authorList>
    </citation>
    <scope>GLYCOSYLATION AT ASN-33 AND ASN-81</scope>
    <source>
        <strain>cv. Greensleeves</strain>
    </source>
</reference>
<reference key="3">
    <citation type="journal article" date="1986" name="Eur. J. Biochem.">
        <title>The position of the oligosaccharide side-chains of phytohemagglutinin and their accessibility to glycosidases determines their subsequent processing in the Golgi.</title>
        <authorList>
            <person name="Faye L."/>
            <person name="Sturm A."/>
            <person name="Bollini R."/>
            <person name="Vitale A."/>
            <person name="Chrispeels M.J."/>
        </authorList>
    </citation>
    <scope>GLYCOSYLATION AT ASN-33 AND ASN-81</scope>
</reference>
<proteinExistence type="evidence at protein level"/>
<feature type="signal peptide">
    <location>
        <begin position="1"/>
        <end position="21"/>
    </location>
</feature>
<feature type="chain" id="PRO_0000017633" description="Erythroagglutinating phytohemagglutinin">
    <location>
        <begin position="22"/>
        <end position="275"/>
    </location>
</feature>
<feature type="glycosylation site" id="CAR_000119" description="N-linked (GlcNAc...) (high mannose) asparagine" evidence="1 2">
    <location>
        <position position="33"/>
    </location>
</feature>
<feature type="glycosylation site" id="CAR_000120" description="N-linked (GlcNAc...) asparagine" evidence="1 2">
    <location>
        <position position="81"/>
    </location>
</feature>
<feature type="glycosylation site" description="N-linked (GlcNAc...) asparagine">
    <location>
        <position position="101"/>
    </location>
</feature>
<feature type="strand" evidence="5">
    <location>
        <begin position="23"/>
        <end position="31"/>
    </location>
</feature>
<feature type="helix" evidence="5">
    <location>
        <begin position="34"/>
        <end position="36"/>
    </location>
</feature>
<feature type="strand" evidence="5">
    <location>
        <begin position="37"/>
        <end position="41"/>
    </location>
</feature>
<feature type="strand" evidence="5">
    <location>
        <begin position="67"/>
        <end position="74"/>
    </location>
</feature>
<feature type="turn" evidence="5">
    <location>
        <begin position="81"/>
        <end position="83"/>
    </location>
</feature>
<feature type="strand" evidence="5">
    <location>
        <begin position="88"/>
        <end position="96"/>
    </location>
</feature>
<feature type="strand" evidence="5">
    <location>
        <begin position="107"/>
        <end position="115"/>
    </location>
</feature>
<feature type="helix" evidence="5">
    <location>
        <begin position="124"/>
        <end position="126"/>
    </location>
</feature>
<feature type="turn" evidence="5">
    <location>
        <begin position="127"/>
        <end position="129"/>
    </location>
</feature>
<feature type="strand" evidence="5">
    <location>
        <begin position="131"/>
        <end position="134"/>
    </location>
</feature>
<feature type="helix" evidence="4">
    <location>
        <begin position="137"/>
        <end position="139"/>
    </location>
</feature>
<feature type="strand" evidence="5">
    <location>
        <begin position="142"/>
        <end position="147"/>
    </location>
</feature>
<feature type="turn" evidence="5">
    <location>
        <begin position="152"/>
        <end position="154"/>
    </location>
</feature>
<feature type="strand" evidence="5">
    <location>
        <begin position="160"/>
        <end position="169"/>
    </location>
</feature>
<feature type="strand" evidence="5">
    <location>
        <begin position="171"/>
        <end position="175"/>
    </location>
</feature>
<feature type="strand" evidence="5">
    <location>
        <begin position="184"/>
        <end position="191"/>
    </location>
</feature>
<feature type="turn" evidence="5">
    <location>
        <begin position="192"/>
        <end position="195"/>
    </location>
</feature>
<feature type="strand" evidence="5">
    <location>
        <begin position="196"/>
        <end position="203"/>
    </location>
</feature>
<feature type="turn" evidence="5">
    <location>
        <begin position="204"/>
        <end position="207"/>
    </location>
</feature>
<feature type="strand" evidence="5">
    <location>
        <begin position="208"/>
        <end position="215"/>
    </location>
</feature>
<feature type="helix" evidence="5">
    <location>
        <begin position="218"/>
        <end position="221"/>
    </location>
</feature>
<feature type="strand" evidence="5">
    <location>
        <begin position="224"/>
        <end position="234"/>
    </location>
</feature>
<feature type="strand" evidence="5">
    <location>
        <begin position="245"/>
        <end position="255"/>
    </location>
</feature>
<feature type="helix" evidence="5">
    <location>
        <begin position="266"/>
        <end position="270"/>
    </location>
</feature>
<keyword id="KW-0002">3D-structure</keyword>
<keyword id="KW-0325">Glycoprotein</keyword>
<keyword id="KW-0430">Lectin</keyword>
<keyword id="KW-0465">Mannose-binding</keyword>
<keyword id="KW-0611">Plant defense</keyword>
<keyword id="KW-0732">Signal</keyword>
<keyword id="KW-0800">Toxin</keyword>
<accession>P05088</accession>
<protein>
    <recommendedName>
        <fullName>Erythroagglutinating phytohemagglutinin</fullName>
    </recommendedName>
    <alternativeName>
        <fullName>PHA-E</fullName>
    </alternativeName>
</protein>
<evidence type="ECO:0000269" key="1">
    <source>
    </source>
</evidence>
<evidence type="ECO:0000269" key="2">
    <source ref="2"/>
</evidence>
<evidence type="ECO:0000305" key="3"/>
<evidence type="ECO:0007829" key="4">
    <source>
        <dbReference type="PDB" id="3WCR"/>
    </source>
</evidence>
<evidence type="ECO:0007829" key="5">
    <source>
        <dbReference type="PDB" id="3WCS"/>
    </source>
</evidence>
<comment type="function">
    <text>This insecticidal carbohydrate-binding lectin is toxic for the cowpea weevil.</text>
</comment>
<comment type="miscellaneous">
    <text>Antibiosis properties of legume lectins are proposed to be due to the lysis of epithelial cells of the intestine by binding to the carbohydrate moieties of these proteins.</text>
</comment>
<comment type="similarity">
    <text evidence="3">Belongs to the leguminous lectin family.</text>
</comment>
<sequence length="275" mass="29746">MASSNLLSLALFLVLLTHANSASQTSFSFQRFNETNLILQRDATVSSKGQLRLTNVNDNGEPTLSSLGRAFYSAPIQIWDNTTGAVAASPTSFTFNIDVPNNSGPADGLAFVLLPVGSQPKDKGGLLGLFNNYKYDSNAHTVAVEFDTLYNVHWDPKPRHIGIDVNSIKSIKTTTWDFVKGENAEVLITYDSSTKLLVASLVYPSLKTSFIVSDTVDLKSVLPEWVIVGFTATTGITKGNVETNDILSWSFASKLSDGTTSEALNLANFALNQIL</sequence>
<name>PHAE_PHAVU</name>
<organism>
    <name type="scientific">Phaseolus vulgaris</name>
    <name type="common">Kidney bean</name>
    <name type="synonym">French bean</name>
    <dbReference type="NCBI Taxonomy" id="3885"/>
    <lineage>
        <taxon>Eukaryota</taxon>
        <taxon>Viridiplantae</taxon>
        <taxon>Streptophyta</taxon>
        <taxon>Embryophyta</taxon>
        <taxon>Tracheophyta</taxon>
        <taxon>Spermatophyta</taxon>
        <taxon>Magnoliopsida</taxon>
        <taxon>eudicotyledons</taxon>
        <taxon>Gunneridae</taxon>
        <taxon>Pentapetalae</taxon>
        <taxon>rosids</taxon>
        <taxon>fabids</taxon>
        <taxon>Fabales</taxon>
        <taxon>Fabaceae</taxon>
        <taxon>Papilionoideae</taxon>
        <taxon>50 kb inversion clade</taxon>
        <taxon>NPAAA clade</taxon>
        <taxon>indigoferoid/millettioid clade</taxon>
        <taxon>Phaseoleae</taxon>
        <taxon>Phaseolus</taxon>
    </lineage>
</organism>
<dbReference type="EMBL" id="X02408">
    <property type="protein sequence ID" value="CAA26256.1"/>
    <property type="molecule type" value="Genomic_DNA"/>
</dbReference>
<dbReference type="EMBL" id="K03288">
    <property type="protein sequence ID" value="AAA33759.1"/>
    <property type="molecule type" value="Genomic_DNA"/>
</dbReference>
<dbReference type="PIR" id="A22826">
    <property type="entry name" value="A22826"/>
</dbReference>
<dbReference type="PDB" id="3WCR">
    <property type="method" value="X-ray"/>
    <property type="resolution" value="2.45 A"/>
    <property type="chains" value="A/B=22-275"/>
</dbReference>
<dbReference type="PDB" id="3WCS">
    <property type="method" value="X-ray"/>
    <property type="resolution" value="1.75 A"/>
    <property type="chains" value="A/B=22-275"/>
</dbReference>
<dbReference type="PDB" id="3WOG">
    <property type="method" value="X-ray"/>
    <property type="resolution" value="2.00 A"/>
    <property type="chains" value="A/B=22-275"/>
</dbReference>
<dbReference type="PDB" id="5AVA">
    <property type="method" value="X-ray"/>
    <property type="resolution" value="3.00 A"/>
    <property type="chains" value="A/B/C/D/E/F/G/H=1-275"/>
</dbReference>
<dbReference type="PDBsum" id="3WCR"/>
<dbReference type="PDBsum" id="3WCS"/>
<dbReference type="PDBsum" id="3WOG"/>
<dbReference type="PDBsum" id="5AVA"/>
<dbReference type="SMR" id="P05088"/>
<dbReference type="Allergome" id="6155">
    <property type="allergen name" value="Pha v PHA"/>
</dbReference>
<dbReference type="UniLectin" id="P05088"/>
<dbReference type="GlyConnect" id="497">
    <property type="glycosylation" value="2 N-Linked glycans (4 sites)"/>
</dbReference>
<dbReference type="GlyCosmos" id="P05088">
    <property type="glycosylation" value="4 sites, 3 glycans"/>
</dbReference>
<dbReference type="EvolutionaryTrace" id="P05088"/>
<dbReference type="GO" id="GO:0005537">
    <property type="term" value="F:D-mannose binding"/>
    <property type="evidence" value="ECO:0007669"/>
    <property type="project" value="UniProtKB-KW"/>
</dbReference>
<dbReference type="GO" id="GO:0090729">
    <property type="term" value="F:toxin activity"/>
    <property type="evidence" value="ECO:0007669"/>
    <property type="project" value="UniProtKB-KW"/>
</dbReference>
<dbReference type="GO" id="GO:0006952">
    <property type="term" value="P:defense response"/>
    <property type="evidence" value="ECO:0007669"/>
    <property type="project" value="UniProtKB-KW"/>
</dbReference>
<dbReference type="CDD" id="cd06899">
    <property type="entry name" value="lectin_legume_LecRK_Arcelin_ConA"/>
    <property type="match status" value="1"/>
</dbReference>
<dbReference type="Gene3D" id="2.60.120.200">
    <property type="match status" value="1"/>
</dbReference>
<dbReference type="InterPro" id="IPR013320">
    <property type="entry name" value="ConA-like_dom_sf"/>
</dbReference>
<dbReference type="InterPro" id="IPR016363">
    <property type="entry name" value="L-lectin"/>
</dbReference>
<dbReference type="InterPro" id="IPR000985">
    <property type="entry name" value="Lectin_LegA_CS"/>
</dbReference>
<dbReference type="InterPro" id="IPR019825">
    <property type="entry name" value="Lectin_legB_Mn/Ca_BS"/>
</dbReference>
<dbReference type="InterPro" id="IPR001220">
    <property type="entry name" value="Legume_lectin_dom"/>
</dbReference>
<dbReference type="InterPro" id="IPR050258">
    <property type="entry name" value="Leguminous_Lectin"/>
</dbReference>
<dbReference type="PANTHER" id="PTHR32401">
    <property type="entry name" value="CONCANAVALIN A-LIKE LECTIN FAMILY PROTEIN"/>
    <property type="match status" value="1"/>
</dbReference>
<dbReference type="PANTHER" id="PTHR32401:SF45">
    <property type="entry name" value="LECTIN"/>
    <property type="match status" value="1"/>
</dbReference>
<dbReference type="Pfam" id="PF00139">
    <property type="entry name" value="Lectin_legB"/>
    <property type="match status" value="1"/>
</dbReference>
<dbReference type="PIRSF" id="PIRSF002690">
    <property type="entry name" value="L-type_lectin_plant"/>
    <property type="match status" value="1"/>
</dbReference>
<dbReference type="SUPFAM" id="SSF49899">
    <property type="entry name" value="Concanavalin A-like lectins/glucanases"/>
    <property type="match status" value="1"/>
</dbReference>
<dbReference type="PROSITE" id="PS00308">
    <property type="entry name" value="LECTIN_LEGUME_ALPHA"/>
    <property type="match status" value="1"/>
</dbReference>
<dbReference type="PROSITE" id="PS00307">
    <property type="entry name" value="LECTIN_LEGUME_BETA"/>
    <property type="match status" value="1"/>
</dbReference>